<organism>
    <name type="scientific">Bacillus cereus (strain ATCC 14579 / DSM 31 / CCUG 7414 / JCM 2152 / NBRC 15305 / NCIMB 9373 / NCTC 2599 / NRRL B-3711)</name>
    <dbReference type="NCBI Taxonomy" id="226900"/>
    <lineage>
        <taxon>Bacteria</taxon>
        <taxon>Bacillati</taxon>
        <taxon>Bacillota</taxon>
        <taxon>Bacilli</taxon>
        <taxon>Bacillales</taxon>
        <taxon>Bacillaceae</taxon>
        <taxon>Bacillus</taxon>
        <taxon>Bacillus cereus group</taxon>
    </lineage>
</organism>
<gene>
    <name evidence="1" type="primary">guaC</name>
    <name type="ordered locus">BC_5452</name>
</gene>
<comment type="function">
    <text evidence="1">Catalyzes the irreversible NADPH-dependent deamination of GMP to IMP. It functions in the conversion of nucleobase, nucleoside and nucleotide derivatives of G to A nucleotides, and in maintaining the intracellular balance of A and G nucleotides.</text>
</comment>
<comment type="catalytic activity">
    <reaction evidence="1">
        <text>IMP + NH4(+) + NADP(+) = GMP + NADPH + 2 H(+)</text>
        <dbReference type="Rhea" id="RHEA:17185"/>
        <dbReference type="ChEBI" id="CHEBI:15378"/>
        <dbReference type="ChEBI" id="CHEBI:28938"/>
        <dbReference type="ChEBI" id="CHEBI:57783"/>
        <dbReference type="ChEBI" id="CHEBI:58053"/>
        <dbReference type="ChEBI" id="CHEBI:58115"/>
        <dbReference type="ChEBI" id="CHEBI:58349"/>
        <dbReference type="EC" id="1.7.1.7"/>
    </reaction>
</comment>
<comment type="similarity">
    <text evidence="1">Belongs to the IMPDH/GMPR family. GuaC type 2 subfamily.</text>
</comment>
<evidence type="ECO:0000255" key="1">
    <source>
        <dbReference type="HAMAP-Rule" id="MF_01511"/>
    </source>
</evidence>
<sequence>MMENVFDYEDIQLIPAKCIVNSRSECDTTVTLGKHKFKLPVVPANMQTIIDERIATYLAENNYFYIMHRFQPEKRISFIRDMQSRGLIASISVGVKEDEYEFVQQLAAEQLTPEYITIDIAHGHSNAVINMIQHIKKHLPESFVIAGNVGTPEAVRELENAGADATKVGIGPGKVCITKIKTGFGTGGWQLAALRWCAKAASKPIIADGGIRTHGDVAKSIRFGATMVMIGSLFAGHEESPGETIERDGKLYKEYFGSASEFQKGEKKNVEGKKMFVEHKGSLEDTLIEMEQDLQSSISYAGGTKLDAIRTVDYVVVKNSIFNGDKVY</sequence>
<name>GUAC_BACCR</name>
<accession>Q814I1</accession>
<dbReference type="EC" id="1.7.1.7" evidence="1"/>
<dbReference type="EMBL" id="AE016877">
    <property type="protein sequence ID" value="AAP12313.1"/>
    <property type="molecule type" value="Genomic_DNA"/>
</dbReference>
<dbReference type="RefSeq" id="NP_835112.1">
    <property type="nucleotide sequence ID" value="NC_004722.1"/>
</dbReference>
<dbReference type="SMR" id="Q814I1"/>
<dbReference type="STRING" id="226900.BC_5452"/>
<dbReference type="MetOSite" id="Q814I1"/>
<dbReference type="KEGG" id="bce:BC5452"/>
<dbReference type="PATRIC" id="fig|226900.8.peg.5633"/>
<dbReference type="HOGENOM" id="CLU_022552_5_0_9"/>
<dbReference type="Proteomes" id="UP000001417">
    <property type="component" value="Chromosome"/>
</dbReference>
<dbReference type="GO" id="GO:1902560">
    <property type="term" value="C:GMP reductase complex"/>
    <property type="evidence" value="ECO:0007669"/>
    <property type="project" value="InterPro"/>
</dbReference>
<dbReference type="GO" id="GO:0003920">
    <property type="term" value="F:GMP reductase activity"/>
    <property type="evidence" value="ECO:0007669"/>
    <property type="project" value="UniProtKB-UniRule"/>
</dbReference>
<dbReference type="GO" id="GO:0016627">
    <property type="term" value="F:oxidoreductase activity, acting on the CH-CH group of donors"/>
    <property type="evidence" value="ECO:0007669"/>
    <property type="project" value="InterPro"/>
</dbReference>
<dbReference type="GO" id="GO:0006207">
    <property type="term" value="P:'de novo' pyrimidine nucleobase biosynthetic process"/>
    <property type="evidence" value="ECO:0007669"/>
    <property type="project" value="InterPro"/>
</dbReference>
<dbReference type="GO" id="GO:0006163">
    <property type="term" value="P:purine nucleotide metabolic process"/>
    <property type="evidence" value="ECO:0007669"/>
    <property type="project" value="UniProtKB-UniRule"/>
</dbReference>
<dbReference type="CDD" id="cd00381">
    <property type="entry name" value="IMPDH"/>
    <property type="match status" value="1"/>
</dbReference>
<dbReference type="FunFam" id="3.20.20.70:FF:000079">
    <property type="entry name" value="GMP reductase"/>
    <property type="match status" value="1"/>
</dbReference>
<dbReference type="Gene3D" id="3.20.20.70">
    <property type="entry name" value="Aldolase class I"/>
    <property type="match status" value="1"/>
</dbReference>
<dbReference type="HAMAP" id="MF_01511">
    <property type="entry name" value="GMP_reduct_type2"/>
    <property type="match status" value="1"/>
</dbReference>
<dbReference type="InterPro" id="IPR013785">
    <property type="entry name" value="Aldolase_TIM"/>
</dbReference>
<dbReference type="InterPro" id="IPR001295">
    <property type="entry name" value="Dihydroorotate_DH_CS"/>
</dbReference>
<dbReference type="InterPro" id="IPR050139">
    <property type="entry name" value="GMP_reductase"/>
</dbReference>
<dbReference type="InterPro" id="IPR005994">
    <property type="entry name" value="GuaC_type_2"/>
</dbReference>
<dbReference type="InterPro" id="IPR015875">
    <property type="entry name" value="IMP_DH/GMP_Rdtase_CS"/>
</dbReference>
<dbReference type="InterPro" id="IPR001093">
    <property type="entry name" value="IMP_DH_GMPRt"/>
</dbReference>
<dbReference type="NCBIfam" id="TIGR01306">
    <property type="entry name" value="GMP_reduct_2"/>
    <property type="match status" value="1"/>
</dbReference>
<dbReference type="NCBIfam" id="NF003966">
    <property type="entry name" value="PRK05458.1"/>
    <property type="match status" value="1"/>
</dbReference>
<dbReference type="PANTHER" id="PTHR43170">
    <property type="entry name" value="GMP REDUCTASE"/>
    <property type="match status" value="1"/>
</dbReference>
<dbReference type="PANTHER" id="PTHR43170:SF5">
    <property type="entry name" value="GMP REDUCTASE"/>
    <property type="match status" value="1"/>
</dbReference>
<dbReference type="Pfam" id="PF00478">
    <property type="entry name" value="IMPDH"/>
    <property type="match status" value="1"/>
</dbReference>
<dbReference type="PIRSF" id="PIRSF036500">
    <property type="entry name" value="GMP_red_Firmic"/>
    <property type="match status" value="1"/>
</dbReference>
<dbReference type="SMART" id="SM01240">
    <property type="entry name" value="IMPDH"/>
    <property type="match status" value="1"/>
</dbReference>
<dbReference type="SUPFAM" id="SSF51412">
    <property type="entry name" value="Inosine monophosphate dehydrogenase (IMPDH)"/>
    <property type="match status" value="1"/>
</dbReference>
<dbReference type="PROSITE" id="PS00487">
    <property type="entry name" value="IMP_DH_GMP_RED"/>
    <property type="match status" value="1"/>
</dbReference>
<keyword id="KW-0521">NADP</keyword>
<keyword id="KW-0560">Oxidoreductase</keyword>
<keyword id="KW-1185">Reference proteome</keyword>
<feature type="chain" id="PRO_0000093748" description="GMP reductase">
    <location>
        <begin position="1"/>
        <end position="328"/>
    </location>
</feature>
<feature type="active site" description="Thioimidate intermediate" evidence="1">
    <location>
        <position position="176"/>
    </location>
</feature>
<feature type="binding site" evidence="1">
    <location>
        <begin position="205"/>
        <end position="228"/>
    </location>
    <ligand>
        <name>NADP(+)</name>
        <dbReference type="ChEBI" id="CHEBI:58349"/>
    </ligand>
</feature>
<protein>
    <recommendedName>
        <fullName evidence="1">GMP reductase</fullName>
        <ecNumber evidence="1">1.7.1.7</ecNumber>
    </recommendedName>
    <alternativeName>
        <fullName evidence="1">Guanosine 5'-monophosphate oxidoreductase</fullName>
        <shortName evidence="1">Guanosine monophosphate reductase</shortName>
    </alternativeName>
</protein>
<proteinExistence type="inferred from homology"/>
<reference key="1">
    <citation type="journal article" date="2003" name="Nature">
        <title>Genome sequence of Bacillus cereus and comparative analysis with Bacillus anthracis.</title>
        <authorList>
            <person name="Ivanova N."/>
            <person name="Sorokin A."/>
            <person name="Anderson I."/>
            <person name="Galleron N."/>
            <person name="Candelon B."/>
            <person name="Kapatral V."/>
            <person name="Bhattacharyya A."/>
            <person name="Reznik G."/>
            <person name="Mikhailova N."/>
            <person name="Lapidus A."/>
            <person name="Chu L."/>
            <person name="Mazur M."/>
            <person name="Goltsman E."/>
            <person name="Larsen N."/>
            <person name="D'Souza M."/>
            <person name="Walunas T."/>
            <person name="Grechkin Y."/>
            <person name="Pusch G."/>
            <person name="Haselkorn R."/>
            <person name="Fonstein M."/>
            <person name="Ehrlich S.D."/>
            <person name="Overbeek R."/>
            <person name="Kyrpides N.C."/>
        </authorList>
    </citation>
    <scope>NUCLEOTIDE SEQUENCE [LARGE SCALE GENOMIC DNA]</scope>
    <source>
        <strain>ATCC 14579 / DSM 31 / CCUG 7414 / JCM 2152 / NBRC 15305 / NCIMB 9373 / NCTC 2599 / NRRL B-3711</strain>
    </source>
</reference>